<organism>
    <name type="scientific">Streptococcus pneumoniae serotype 4 (strain ATCC BAA-334 / TIGR4)</name>
    <dbReference type="NCBI Taxonomy" id="170187"/>
    <lineage>
        <taxon>Bacteria</taxon>
        <taxon>Bacillati</taxon>
        <taxon>Bacillota</taxon>
        <taxon>Bacilli</taxon>
        <taxon>Lactobacillales</taxon>
        <taxon>Streptococcaceae</taxon>
        <taxon>Streptococcus</taxon>
    </lineage>
</organism>
<sequence length="534" mass="59857">MSLAIAVFAVIIGLVIGYVSISAKMKSSQEAAELMLLNAEQEATNLRGQAEREADLLVNEAKRESKSLKKEALLEAKEEARKYREEVDAEFKSERQELKQIESRLTERATSLDRKDDNLTSKEQTLEQKEQSISDRAKNLDAREEQLEEVERQKEAELERIGALSQAEARDIILAQTEENLTREIASRIREAEQEVKERSDKMAKDILVQAMQRIAGEYVAESTNSTVHLPDDTMKGRIIGREGRNIRTFESLTGVDVIIDDTPEVVTLSGFDPIRREIARMTMEMLLKDGRIHPARIEELVEKNRQEIDNKIREYGEAAAYEIGAPNLHPDLMKIMGRLQFRTSYGQNVLRHSIEVAKLAGIMASELGENAALARRAGFLHDIGKAIDHEVEGSHVEIGMELARKYKEPPVVVNTIASHHGDVEAESVIAVIVAAADALSAARPGARSESLESYIKRLHDLEEIANGFEGVQTSFALQAGREIRIMVNPGKIKDDKVTILAHKVRKKIENNLDYPGNIKVTVIRELRAVDYAK</sequence>
<dbReference type="EC" id="3.1.-.-" evidence="1"/>
<dbReference type="EMBL" id="AE005672">
    <property type="protein sequence ID" value="AAK75815.1"/>
    <property type="molecule type" value="Genomic_DNA"/>
</dbReference>
<dbReference type="PIR" id="F95202">
    <property type="entry name" value="F95202"/>
</dbReference>
<dbReference type="SMR" id="P67282"/>
<dbReference type="PaxDb" id="170187-SP_1739"/>
<dbReference type="EnsemblBacteria" id="AAK75815">
    <property type="protein sequence ID" value="AAK75815"/>
    <property type="gene ID" value="SP_1739"/>
</dbReference>
<dbReference type="KEGG" id="spn:SP_1739"/>
<dbReference type="eggNOG" id="COG1418">
    <property type="taxonomic scope" value="Bacteria"/>
</dbReference>
<dbReference type="eggNOG" id="COG3599">
    <property type="taxonomic scope" value="Bacteria"/>
</dbReference>
<dbReference type="PhylomeDB" id="P67282"/>
<dbReference type="Proteomes" id="UP000000585">
    <property type="component" value="Chromosome"/>
</dbReference>
<dbReference type="GO" id="GO:0005886">
    <property type="term" value="C:plasma membrane"/>
    <property type="evidence" value="ECO:0007669"/>
    <property type="project" value="UniProtKB-SubCell"/>
</dbReference>
<dbReference type="GO" id="GO:0003723">
    <property type="term" value="F:RNA binding"/>
    <property type="evidence" value="ECO:0007669"/>
    <property type="project" value="UniProtKB-UniRule"/>
</dbReference>
<dbReference type="GO" id="GO:0004521">
    <property type="term" value="F:RNA endonuclease activity"/>
    <property type="evidence" value="ECO:0007669"/>
    <property type="project" value="UniProtKB-UniRule"/>
</dbReference>
<dbReference type="GO" id="GO:0006402">
    <property type="term" value="P:mRNA catabolic process"/>
    <property type="evidence" value="ECO:0007669"/>
    <property type="project" value="UniProtKB-UniRule"/>
</dbReference>
<dbReference type="CDD" id="cd00077">
    <property type="entry name" value="HDc"/>
    <property type="match status" value="1"/>
</dbReference>
<dbReference type="CDD" id="cd22431">
    <property type="entry name" value="KH-I_RNaseY"/>
    <property type="match status" value="1"/>
</dbReference>
<dbReference type="FunFam" id="1.10.3210.10:FF:000003">
    <property type="entry name" value="Ribonuclease Y"/>
    <property type="match status" value="1"/>
</dbReference>
<dbReference type="Gene3D" id="1.10.3210.10">
    <property type="entry name" value="Hypothetical protein af1432"/>
    <property type="match status" value="1"/>
</dbReference>
<dbReference type="Gene3D" id="3.30.1370.10">
    <property type="entry name" value="K Homology domain, type 1"/>
    <property type="match status" value="1"/>
</dbReference>
<dbReference type="HAMAP" id="MF_00335">
    <property type="entry name" value="RNase_Y"/>
    <property type="match status" value="1"/>
</dbReference>
<dbReference type="InterPro" id="IPR003607">
    <property type="entry name" value="HD/PDEase_dom"/>
</dbReference>
<dbReference type="InterPro" id="IPR006674">
    <property type="entry name" value="HD_domain"/>
</dbReference>
<dbReference type="InterPro" id="IPR006675">
    <property type="entry name" value="HDIG_dom"/>
</dbReference>
<dbReference type="InterPro" id="IPR004087">
    <property type="entry name" value="KH_dom"/>
</dbReference>
<dbReference type="InterPro" id="IPR004088">
    <property type="entry name" value="KH_dom_type_1"/>
</dbReference>
<dbReference type="InterPro" id="IPR036612">
    <property type="entry name" value="KH_dom_type_1_sf"/>
</dbReference>
<dbReference type="InterPro" id="IPR017705">
    <property type="entry name" value="Ribonuclease_Y"/>
</dbReference>
<dbReference type="InterPro" id="IPR022711">
    <property type="entry name" value="RNase_Y_N"/>
</dbReference>
<dbReference type="NCBIfam" id="TIGR00277">
    <property type="entry name" value="HDIG"/>
    <property type="match status" value="1"/>
</dbReference>
<dbReference type="NCBIfam" id="NF000997">
    <property type="entry name" value="PRK00106.1"/>
    <property type="match status" value="1"/>
</dbReference>
<dbReference type="NCBIfam" id="TIGR03319">
    <property type="entry name" value="RNase_Y"/>
    <property type="match status" value="1"/>
</dbReference>
<dbReference type="PANTHER" id="PTHR12826">
    <property type="entry name" value="RIBONUCLEASE Y"/>
    <property type="match status" value="1"/>
</dbReference>
<dbReference type="PANTHER" id="PTHR12826:SF15">
    <property type="entry name" value="RIBONUCLEASE Y"/>
    <property type="match status" value="1"/>
</dbReference>
<dbReference type="Pfam" id="PF01966">
    <property type="entry name" value="HD"/>
    <property type="match status" value="1"/>
</dbReference>
<dbReference type="Pfam" id="PF00013">
    <property type="entry name" value="KH_1"/>
    <property type="match status" value="1"/>
</dbReference>
<dbReference type="Pfam" id="PF12072">
    <property type="entry name" value="RNase_Y_N"/>
    <property type="match status" value="1"/>
</dbReference>
<dbReference type="SMART" id="SM00471">
    <property type="entry name" value="HDc"/>
    <property type="match status" value="1"/>
</dbReference>
<dbReference type="SMART" id="SM00322">
    <property type="entry name" value="KH"/>
    <property type="match status" value="1"/>
</dbReference>
<dbReference type="SUPFAM" id="SSF54791">
    <property type="entry name" value="Eukaryotic type KH-domain (KH-domain type I)"/>
    <property type="match status" value="1"/>
</dbReference>
<dbReference type="SUPFAM" id="SSF109604">
    <property type="entry name" value="HD-domain/PDEase-like"/>
    <property type="match status" value="1"/>
</dbReference>
<dbReference type="PROSITE" id="PS51831">
    <property type="entry name" value="HD"/>
    <property type="match status" value="1"/>
</dbReference>
<dbReference type="PROSITE" id="PS50084">
    <property type="entry name" value="KH_TYPE_1"/>
    <property type="match status" value="1"/>
</dbReference>
<accession>P67282</accession>
<accession>Q8DNR4</accession>
<accession>Q97PA2</accession>
<reference key="1">
    <citation type="journal article" date="2001" name="Science">
        <title>Complete genome sequence of a virulent isolate of Streptococcus pneumoniae.</title>
        <authorList>
            <person name="Tettelin H."/>
            <person name="Nelson K.E."/>
            <person name="Paulsen I.T."/>
            <person name="Eisen J.A."/>
            <person name="Read T.D."/>
            <person name="Peterson S.N."/>
            <person name="Heidelberg J.F."/>
            <person name="DeBoy R.T."/>
            <person name="Haft D.H."/>
            <person name="Dodson R.J."/>
            <person name="Durkin A.S."/>
            <person name="Gwinn M.L."/>
            <person name="Kolonay J.F."/>
            <person name="Nelson W.C."/>
            <person name="Peterson J.D."/>
            <person name="Umayam L.A."/>
            <person name="White O."/>
            <person name="Salzberg S.L."/>
            <person name="Lewis M.R."/>
            <person name="Radune D."/>
            <person name="Holtzapple E.K."/>
            <person name="Khouri H.M."/>
            <person name="Wolf A.M."/>
            <person name="Utterback T.R."/>
            <person name="Hansen C.L."/>
            <person name="McDonald L.A."/>
            <person name="Feldblyum T.V."/>
            <person name="Angiuoli S.V."/>
            <person name="Dickinson T."/>
            <person name="Hickey E.K."/>
            <person name="Holt I.E."/>
            <person name="Loftus B.J."/>
            <person name="Yang F."/>
            <person name="Smith H.O."/>
            <person name="Venter J.C."/>
            <person name="Dougherty B.A."/>
            <person name="Morrison D.A."/>
            <person name="Hollingshead S.K."/>
            <person name="Fraser C.M."/>
        </authorList>
    </citation>
    <scope>NUCLEOTIDE SEQUENCE [LARGE SCALE GENOMIC DNA]</scope>
    <source>
        <strain>ATCC BAA-334 / TIGR4</strain>
    </source>
</reference>
<comment type="function">
    <text evidence="1">Endoribonuclease that initiates mRNA decay.</text>
</comment>
<comment type="subcellular location">
    <subcellularLocation>
        <location evidence="1">Cell membrane</location>
        <topology evidence="1">Single-pass membrane protein</topology>
    </subcellularLocation>
</comment>
<comment type="similarity">
    <text evidence="1">Belongs to the RNase Y family.</text>
</comment>
<proteinExistence type="inferred from homology"/>
<protein>
    <recommendedName>
        <fullName evidence="1">Ribonuclease Y</fullName>
        <shortName evidence="1">RNase Y</shortName>
        <ecNumber evidence="1">3.1.-.-</ecNumber>
    </recommendedName>
</protein>
<evidence type="ECO:0000255" key="1">
    <source>
        <dbReference type="HAMAP-Rule" id="MF_00335"/>
    </source>
</evidence>
<evidence type="ECO:0000255" key="2">
    <source>
        <dbReference type="PROSITE-ProRule" id="PRU01175"/>
    </source>
</evidence>
<evidence type="ECO:0000256" key="3">
    <source>
        <dbReference type="SAM" id="MobiDB-lite"/>
    </source>
</evidence>
<feature type="chain" id="PRO_0000163797" description="Ribonuclease Y">
    <location>
        <begin position="1"/>
        <end position="534"/>
    </location>
</feature>
<feature type="transmembrane region" description="Helical" evidence="1">
    <location>
        <begin position="1"/>
        <end position="21"/>
    </location>
</feature>
<feature type="domain" description="KH" evidence="1">
    <location>
        <begin position="224"/>
        <end position="287"/>
    </location>
</feature>
<feature type="domain" description="HD" evidence="2">
    <location>
        <begin position="350"/>
        <end position="443"/>
    </location>
</feature>
<feature type="region of interest" description="Disordered" evidence="3">
    <location>
        <begin position="109"/>
        <end position="141"/>
    </location>
</feature>
<name>RNY_STRPN</name>
<gene>
    <name evidence="1" type="primary">rny</name>
    <name type="ordered locus">SP_1739</name>
</gene>
<keyword id="KW-1003">Cell membrane</keyword>
<keyword id="KW-0255">Endonuclease</keyword>
<keyword id="KW-0378">Hydrolase</keyword>
<keyword id="KW-0472">Membrane</keyword>
<keyword id="KW-0540">Nuclease</keyword>
<keyword id="KW-1185">Reference proteome</keyword>
<keyword id="KW-0694">RNA-binding</keyword>
<keyword id="KW-0812">Transmembrane</keyword>
<keyword id="KW-1133">Transmembrane helix</keyword>